<name>CBLN3_MOUSE</name>
<organism>
    <name type="scientific">Mus musculus</name>
    <name type="common">Mouse</name>
    <dbReference type="NCBI Taxonomy" id="10090"/>
    <lineage>
        <taxon>Eukaryota</taxon>
        <taxon>Metazoa</taxon>
        <taxon>Chordata</taxon>
        <taxon>Craniata</taxon>
        <taxon>Vertebrata</taxon>
        <taxon>Euteleostomi</taxon>
        <taxon>Mammalia</taxon>
        <taxon>Eutheria</taxon>
        <taxon>Euarchontoglires</taxon>
        <taxon>Glires</taxon>
        <taxon>Rodentia</taxon>
        <taxon>Myomorpha</taxon>
        <taxon>Muroidea</taxon>
        <taxon>Muridae</taxon>
        <taxon>Murinae</taxon>
        <taxon>Mus</taxon>
        <taxon>Mus</taxon>
    </lineage>
</organism>
<evidence type="ECO:0000250" key="1">
    <source>
        <dbReference type="UniProtKB" id="Q9R171"/>
    </source>
</evidence>
<evidence type="ECO:0000255" key="2"/>
<evidence type="ECO:0000255" key="3">
    <source>
        <dbReference type="PROSITE-ProRule" id="PRU00368"/>
    </source>
</evidence>
<evidence type="ECO:0000269" key="4">
    <source>
    </source>
</evidence>
<evidence type="ECO:0000269" key="5">
    <source>
    </source>
</evidence>
<evidence type="ECO:0000269" key="6">
    <source>
    </source>
</evidence>
<evidence type="ECO:0000269" key="7">
    <source>
    </source>
</evidence>
<comment type="function">
    <text>May be involved in synaptic functions in the CNS.</text>
</comment>
<comment type="subunit">
    <text evidence="1 4 6">Heterohexamer; disulfide-linked heterotrimers (By similarity). Interacts with CBLN1. May also form oligomers with CBLN2 and CBLN4.</text>
</comment>
<comment type="subcellular location">
    <subcellularLocation>
        <location>Endoplasmic reticulum</location>
    </subcellularLocation>
    <subcellularLocation>
        <location>Golgi apparatus</location>
        <location>cis-Golgi network</location>
    </subcellularLocation>
    <subcellularLocation>
        <location>Secreted</location>
    </subcellularLocation>
    <subcellularLocation>
        <location>Synapse</location>
    </subcellularLocation>
    <text>In the absence of CBLN1, remains in the endoplasmic reticulum/cis-Golgi apparatus. Partial secretion depends on an association with CBLN1 and maybe CBLN4, but not on CBLN2.</text>
</comment>
<comment type="tissue specificity">
    <text evidence="5 7">Expressed in brain, restricted to the cerebellar cortex. Within the cerebellum, expressed in granule layers (at protein level). Also detected in postsynaptic Purkinje cell spines (at protein level).</text>
</comment>
<comment type="developmental stage">
    <text evidence="5">In the developing brain, selectively expressed as early as postnatal day 7-10 in cerebellar granule cells.</text>
</comment>
<sequence>MGTEWHKPKLSLALVLLTLEAGWAQEGSEPVLLEGECLVVCEPGRPTAGGPGGAALGEAPPGRVAFAAVRSHHHEPAGETGNGTSGAIYFDQVLVNEGEGFDRTSGCFVAPVRGVYSFRFHVVKVYNRQTVQVSLMLNTWPVISAFANDPDVTREAATSSVLLPLDPGDRVSLRLRRGNLLGGWKYSSFSGFLIFPL</sequence>
<feature type="signal peptide" evidence="2">
    <location>
        <begin position="1"/>
        <end position="24"/>
    </location>
</feature>
<feature type="chain" id="PRO_0000003555" description="Cerebellin-3">
    <location>
        <begin position="25"/>
        <end position="197"/>
    </location>
</feature>
<feature type="domain" description="C1q" evidence="3">
    <location>
        <begin position="59"/>
        <end position="197"/>
    </location>
</feature>
<feature type="region of interest" description="Necessary for interaction with CBLN3, and homotrimerization">
    <location>
        <begin position="64"/>
        <end position="197"/>
    </location>
</feature>
<feature type="glycosylation site" description="N-linked (GlcNAc...) asparagine" evidence="2">
    <location>
        <position position="82"/>
    </location>
</feature>
<feature type="disulfide bond" description="Interchain" evidence="1">
    <location>
        <position position="37"/>
    </location>
</feature>
<feature type="disulfide bond" description="Interchain" evidence="1">
    <location>
        <position position="41"/>
    </location>
</feature>
<feature type="mutagenesis site" description="Promotes self-association and secretion independent of CBLN1." evidence="6">
    <original>R</original>
    <variation>A</variation>
    <location>
        <position position="119"/>
    </location>
</feature>
<gene>
    <name type="primary">Cbln3</name>
</gene>
<protein>
    <recommendedName>
        <fullName>Cerebellin-3</fullName>
    </recommendedName>
</protein>
<dbReference type="EMBL" id="AF218380">
    <property type="protein sequence ID" value="AAF32315.1"/>
    <property type="molecule type" value="Genomic_DNA"/>
</dbReference>
<dbReference type="EMBL" id="AF218379">
    <property type="protein sequence ID" value="AAF32314.1"/>
    <property type="molecule type" value="mRNA"/>
</dbReference>
<dbReference type="EMBL" id="BC065108">
    <property type="protein sequence ID" value="AAH65108.1"/>
    <property type="molecule type" value="mRNA"/>
</dbReference>
<dbReference type="CCDS" id="CCDS27133.1"/>
<dbReference type="RefSeq" id="NP_062794.1">
    <property type="nucleotide sequence ID" value="NM_019820.3"/>
</dbReference>
<dbReference type="SMR" id="Q9JHG0"/>
<dbReference type="BioGRID" id="207961">
    <property type="interactions" value="1"/>
</dbReference>
<dbReference type="FunCoup" id="Q9JHG0">
    <property type="interactions" value="27"/>
</dbReference>
<dbReference type="STRING" id="10090.ENSMUSP00000070494"/>
<dbReference type="GlyConnect" id="2206">
    <property type="glycosylation" value="1 N-Linked glycan (1 site)"/>
</dbReference>
<dbReference type="GlyCosmos" id="Q9JHG0">
    <property type="glycosylation" value="1 site, 1 glycan"/>
</dbReference>
<dbReference type="GlyGen" id="Q9JHG0">
    <property type="glycosylation" value="1 site, 1 N-linked glycan (1 site)"/>
</dbReference>
<dbReference type="iPTMnet" id="Q9JHG0"/>
<dbReference type="PhosphoSitePlus" id="Q9JHG0"/>
<dbReference type="PaxDb" id="10090-ENSMUSP00000070494"/>
<dbReference type="PeptideAtlas" id="Q9JHG0"/>
<dbReference type="ProteomicsDB" id="265344"/>
<dbReference type="Antibodypedia" id="50437">
    <property type="antibodies" value="73 antibodies from 18 providers"/>
</dbReference>
<dbReference type="DNASU" id="56410"/>
<dbReference type="Ensembl" id="ENSMUST00000063871.13">
    <property type="protein sequence ID" value="ENSMUSP00000070494.6"/>
    <property type="gene ID" value="ENSMUSG00000040380.16"/>
</dbReference>
<dbReference type="GeneID" id="56410"/>
<dbReference type="KEGG" id="mmu:56410"/>
<dbReference type="UCSC" id="uc007uba.1">
    <property type="organism name" value="mouse"/>
</dbReference>
<dbReference type="AGR" id="MGI:1889286"/>
<dbReference type="CTD" id="643866"/>
<dbReference type="MGI" id="MGI:1889286">
    <property type="gene designation" value="Cbln3"/>
</dbReference>
<dbReference type="VEuPathDB" id="HostDB:ENSMUSG00000040380"/>
<dbReference type="eggNOG" id="ENOG502QVN9">
    <property type="taxonomic scope" value="Eukaryota"/>
</dbReference>
<dbReference type="GeneTree" id="ENSGT00940000162110"/>
<dbReference type="HOGENOM" id="CLU_001074_8_2_1"/>
<dbReference type="InParanoid" id="Q9JHG0"/>
<dbReference type="OMA" id="AKRHWPP"/>
<dbReference type="OrthoDB" id="6154955at2759"/>
<dbReference type="PhylomeDB" id="Q9JHG0"/>
<dbReference type="TreeFam" id="TF329591"/>
<dbReference type="BioGRID-ORCS" id="56410">
    <property type="hits" value="1 hit in 76 CRISPR screens"/>
</dbReference>
<dbReference type="PRO" id="PR:Q9JHG0"/>
<dbReference type="Proteomes" id="UP000000589">
    <property type="component" value="Chromosome 14"/>
</dbReference>
<dbReference type="RNAct" id="Q9JHG0">
    <property type="molecule type" value="protein"/>
</dbReference>
<dbReference type="Bgee" id="ENSMUSG00000040380">
    <property type="expression patterns" value="Expressed in cerebellar vermis and 38 other cell types or tissues"/>
</dbReference>
<dbReference type="GO" id="GO:0005783">
    <property type="term" value="C:endoplasmic reticulum"/>
    <property type="evidence" value="ECO:0007669"/>
    <property type="project" value="UniProtKB-SubCell"/>
</dbReference>
<dbReference type="GO" id="GO:0005615">
    <property type="term" value="C:extracellular space"/>
    <property type="evidence" value="ECO:0000314"/>
    <property type="project" value="MGI"/>
</dbReference>
<dbReference type="GO" id="GO:0005794">
    <property type="term" value="C:Golgi apparatus"/>
    <property type="evidence" value="ECO:0007669"/>
    <property type="project" value="UniProtKB-SubCell"/>
</dbReference>
<dbReference type="GO" id="GO:0098688">
    <property type="term" value="C:parallel fiber to Purkinje cell synapse"/>
    <property type="evidence" value="ECO:0000314"/>
    <property type="project" value="SynGO"/>
</dbReference>
<dbReference type="GO" id="GO:0045202">
    <property type="term" value="C:synapse"/>
    <property type="evidence" value="ECO:0000314"/>
    <property type="project" value="MGI"/>
</dbReference>
<dbReference type="GO" id="GO:0043083">
    <property type="term" value="C:synaptic cleft"/>
    <property type="evidence" value="ECO:0000314"/>
    <property type="project" value="SynGO"/>
</dbReference>
<dbReference type="FunFam" id="2.60.120.40:FF:000002">
    <property type="entry name" value="Cerebellin 4"/>
    <property type="match status" value="1"/>
</dbReference>
<dbReference type="Gene3D" id="2.60.120.40">
    <property type="match status" value="1"/>
</dbReference>
<dbReference type="InterPro" id="IPR001073">
    <property type="entry name" value="C1q_dom"/>
</dbReference>
<dbReference type="InterPro" id="IPR050822">
    <property type="entry name" value="Cerebellin_Synaptic_Org"/>
</dbReference>
<dbReference type="InterPro" id="IPR008983">
    <property type="entry name" value="Tumour_necrosis_fac-like_dom"/>
</dbReference>
<dbReference type="PANTHER" id="PTHR22923:SF2">
    <property type="entry name" value="CEREBELLIN-3"/>
    <property type="match status" value="1"/>
</dbReference>
<dbReference type="PANTHER" id="PTHR22923">
    <property type="entry name" value="CEREBELLIN-RELATED"/>
    <property type="match status" value="1"/>
</dbReference>
<dbReference type="Pfam" id="PF00386">
    <property type="entry name" value="C1q"/>
    <property type="match status" value="1"/>
</dbReference>
<dbReference type="PRINTS" id="PR00007">
    <property type="entry name" value="COMPLEMNTC1Q"/>
</dbReference>
<dbReference type="SMART" id="SM00110">
    <property type="entry name" value="C1Q"/>
    <property type="match status" value="1"/>
</dbReference>
<dbReference type="SUPFAM" id="SSF49842">
    <property type="entry name" value="TNF-like"/>
    <property type="match status" value="1"/>
</dbReference>
<dbReference type="PROSITE" id="PS50871">
    <property type="entry name" value="C1Q"/>
    <property type="match status" value="1"/>
</dbReference>
<accession>Q9JHG0</accession>
<reference key="1">
    <citation type="journal article" date="2000" name="J. Neurosci.">
        <title>Cbln3, a novel member of the precerebellin family that binds specifically to Cbln1.</title>
        <authorList>
            <person name="Pang Z."/>
            <person name="Zuo J."/>
            <person name="Morgan J.I."/>
        </authorList>
    </citation>
    <scope>NUCLEOTIDE SEQUENCE [GENOMIC DNA / MRNA]</scope>
    <scope>INTERACTION WITH CBLN1</scope>
</reference>
<reference key="2">
    <citation type="journal article" date="2004" name="Genome Res.">
        <title>The status, quality, and expansion of the NIH full-length cDNA project: the Mammalian Gene Collection (MGC).</title>
        <authorList>
            <consortium name="The MGC Project Team"/>
        </authorList>
    </citation>
    <scope>NUCLEOTIDE SEQUENCE [LARGE SCALE MRNA]</scope>
    <source>
        <strain>C57BL/6J</strain>
        <tissue>Brain</tissue>
    </source>
</reference>
<reference key="3">
    <citation type="journal article" date="2006" name="Eur. J. Neurosci.">
        <title>Distinct expression of Cbln family mRNAs in developing and adult mouse brains.</title>
        <authorList>
            <person name="Miura E."/>
            <person name="Iijima T."/>
            <person name="Yuzaki M."/>
            <person name="Watanabe M."/>
        </authorList>
    </citation>
    <scope>TISSUE SPECIFICITY</scope>
    <scope>DEVELOPMENTAL STAGE</scope>
</reference>
<reference key="4">
    <citation type="journal article" date="2006" name="Mol. Cell. Biol.">
        <title>Cbln1 is essential for interaction-dependent secretion of cbln3.</title>
        <authorList>
            <person name="Bao D."/>
            <person name="Pang Z."/>
            <person name="Morgan M.A."/>
            <person name="Parris J."/>
            <person name="Rong Y."/>
            <person name="Li L."/>
            <person name="Morgan J.I."/>
        </authorList>
    </citation>
    <scope>SUBCELLULAR LOCATION</scope>
    <scope>INTERACTION WITH CBLN1; CBLN2 AND CBLN4</scope>
    <scope>MUTAGENESIS OF ARG-119</scope>
</reference>
<reference key="5">
    <citation type="journal article" date="2007" name="Eur. J. Neurosci.">
        <title>Characterization of a transneuronal cytokine family Cbln - regulation of secretion by heteromeric assembly.</title>
        <authorList>
            <person name="Iijima T."/>
            <person name="Miura E."/>
            <person name="Matsuda K."/>
            <person name="Kamekawa Y."/>
            <person name="Watanabe M."/>
            <person name="Yuzaki M."/>
        </authorList>
    </citation>
    <scope>OLIGOMERIZATION WITH CBLN1; CBLN2; CBLN3 AND CBLN4</scope>
    <scope>SUBCELLULAR LOCATION</scope>
    <scope>TISSUE SPECIFICITY</scope>
</reference>
<keyword id="KW-1015">Disulfide bond</keyword>
<keyword id="KW-0256">Endoplasmic reticulum</keyword>
<keyword id="KW-0325">Glycoprotein</keyword>
<keyword id="KW-0333">Golgi apparatus</keyword>
<keyword id="KW-1185">Reference proteome</keyword>
<keyword id="KW-0964">Secreted</keyword>
<keyword id="KW-0732">Signal</keyword>
<keyword id="KW-0770">Synapse</keyword>
<proteinExistence type="evidence at protein level"/>